<keyword id="KW-0963">Cytoplasm</keyword>
<keyword id="KW-0444">Lipid biosynthesis</keyword>
<keyword id="KW-0443">Lipid metabolism</keyword>
<keyword id="KW-0594">Phospholipid biosynthesis</keyword>
<keyword id="KW-1208">Phospholipid metabolism</keyword>
<keyword id="KW-1185">Reference proteome</keyword>
<keyword id="KW-0808">Transferase</keyword>
<feature type="chain" id="PRO_0000329261" description="Phosphate acyltransferase">
    <location>
        <begin position="1"/>
        <end position="338"/>
    </location>
</feature>
<evidence type="ECO:0000255" key="1">
    <source>
        <dbReference type="HAMAP-Rule" id="MF_00019"/>
    </source>
</evidence>
<protein>
    <recommendedName>
        <fullName evidence="1">Phosphate acyltransferase</fullName>
        <ecNumber evidence="1">2.3.1.274</ecNumber>
    </recommendedName>
    <alternativeName>
        <fullName evidence="1">Acyl-ACP phosphotransacylase</fullName>
    </alternativeName>
    <alternativeName>
        <fullName evidence="1">Acyl-[acyl-carrier-protein]--phosphate acyltransferase</fullName>
    </alternativeName>
    <alternativeName>
        <fullName evidence="1">Phosphate-acyl-ACP acyltransferase</fullName>
    </alternativeName>
</protein>
<accession>Q2S6I5</accession>
<dbReference type="EC" id="2.3.1.274" evidence="1"/>
<dbReference type="EMBL" id="CP000159">
    <property type="protein sequence ID" value="ABC43773.1"/>
    <property type="molecule type" value="Genomic_DNA"/>
</dbReference>
<dbReference type="RefSeq" id="WP_011402829.1">
    <property type="nucleotide sequence ID" value="NC_007677.1"/>
</dbReference>
<dbReference type="RefSeq" id="YP_444196.1">
    <property type="nucleotide sequence ID" value="NC_007677.1"/>
</dbReference>
<dbReference type="SMR" id="Q2S6I5"/>
<dbReference type="STRING" id="309807.SRU_0041"/>
<dbReference type="EnsemblBacteria" id="ABC43773">
    <property type="protein sequence ID" value="ABC43773"/>
    <property type="gene ID" value="SRU_0041"/>
</dbReference>
<dbReference type="KEGG" id="sru:SRU_0041"/>
<dbReference type="PATRIC" id="fig|309807.25.peg.39"/>
<dbReference type="eggNOG" id="COG0416">
    <property type="taxonomic scope" value="Bacteria"/>
</dbReference>
<dbReference type="HOGENOM" id="CLU_039379_1_0_10"/>
<dbReference type="OrthoDB" id="9806408at2"/>
<dbReference type="UniPathway" id="UPA00085"/>
<dbReference type="Proteomes" id="UP000008674">
    <property type="component" value="Chromosome"/>
</dbReference>
<dbReference type="GO" id="GO:0005737">
    <property type="term" value="C:cytoplasm"/>
    <property type="evidence" value="ECO:0007669"/>
    <property type="project" value="UniProtKB-SubCell"/>
</dbReference>
<dbReference type="GO" id="GO:0043811">
    <property type="term" value="F:phosphate:acyl-[acyl carrier protein] acyltransferase activity"/>
    <property type="evidence" value="ECO:0007669"/>
    <property type="project" value="UniProtKB-UniRule"/>
</dbReference>
<dbReference type="GO" id="GO:0006633">
    <property type="term" value="P:fatty acid biosynthetic process"/>
    <property type="evidence" value="ECO:0007669"/>
    <property type="project" value="UniProtKB-UniRule"/>
</dbReference>
<dbReference type="GO" id="GO:0008654">
    <property type="term" value="P:phospholipid biosynthetic process"/>
    <property type="evidence" value="ECO:0007669"/>
    <property type="project" value="UniProtKB-KW"/>
</dbReference>
<dbReference type="Gene3D" id="3.40.718.10">
    <property type="entry name" value="Isopropylmalate Dehydrogenase"/>
    <property type="match status" value="1"/>
</dbReference>
<dbReference type="HAMAP" id="MF_00019">
    <property type="entry name" value="PlsX"/>
    <property type="match status" value="1"/>
</dbReference>
<dbReference type="InterPro" id="IPR003664">
    <property type="entry name" value="FA_synthesis"/>
</dbReference>
<dbReference type="InterPro" id="IPR012281">
    <property type="entry name" value="Phospholipid_synth_PlsX-like"/>
</dbReference>
<dbReference type="NCBIfam" id="TIGR00182">
    <property type="entry name" value="plsX"/>
    <property type="match status" value="1"/>
</dbReference>
<dbReference type="PANTHER" id="PTHR30100">
    <property type="entry name" value="FATTY ACID/PHOSPHOLIPID SYNTHESIS PROTEIN PLSX"/>
    <property type="match status" value="1"/>
</dbReference>
<dbReference type="PANTHER" id="PTHR30100:SF1">
    <property type="entry name" value="PHOSPHATE ACYLTRANSFERASE"/>
    <property type="match status" value="1"/>
</dbReference>
<dbReference type="Pfam" id="PF02504">
    <property type="entry name" value="FA_synthesis"/>
    <property type="match status" value="1"/>
</dbReference>
<dbReference type="PIRSF" id="PIRSF002465">
    <property type="entry name" value="Phsphlp_syn_PlsX"/>
    <property type="match status" value="1"/>
</dbReference>
<dbReference type="SUPFAM" id="SSF53659">
    <property type="entry name" value="Isocitrate/Isopropylmalate dehydrogenase-like"/>
    <property type="match status" value="1"/>
</dbReference>
<name>PLSX_SALRD</name>
<organism>
    <name type="scientific">Salinibacter ruber (strain DSM 13855 / M31)</name>
    <dbReference type="NCBI Taxonomy" id="309807"/>
    <lineage>
        <taxon>Bacteria</taxon>
        <taxon>Pseudomonadati</taxon>
        <taxon>Rhodothermota</taxon>
        <taxon>Rhodothermia</taxon>
        <taxon>Rhodothermales</taxon>
        <taxon>Salinibacteraceae</taxon>
        <taxon>Salinibacter</taxon>
    </lineage>
</organism>
<proteinExistence type="inferred from homology"/>
<comment type="function">
    <text evidence="1">Catalyzes the reversible formation of acyl-phosphate (acyl-PO(4)) from acyl-[acyl-carrier-protein] (acyl-ACP). This enzyme utilizes acyl-ACP as fatty acyl donor, but not acyl-CoA.</text>
</comment>
<comment type="catalytic activity">
    <reaction evidence="1">
        <text>a fatty acyl-[ACP] + phosphate = an acyl phosphate + holo-[ACP]</text>
        <dbReference type="Rhea" id="RHEA:42292"/>
        <dbReference type="Rhea" id="RHEA-COMP:9685"/>
        <dbReference type="Rhea" id="RHEA-COMP:14125"/>
        <dbReference type="ChEBI" id="CHEBI:43474"/>
        <dbReference type="ChEBI" id="CHEBI:59918"/>
        <dbReference type="ChEBI" id="CHEBI:64479"/>
        <dbReference type="ChEBI" id="CHEBI:138651"/>
        <dbReference type="EC" id="2.3.1.274"/>
    </reaction>
</comment>
<comment type="pathway">
    <text evidence="1">Lipid metabolism; phospholipid metabolism.</text>
</comment>
<comment type="subunit">
    <text evidence="1">Homodimer. Probably interacts with PlsY.</text>
</comment>
<comment type="subcellular location">
    <subcellularLocation>
        <location evidence="1">Cytoplasm</location>
    </subcellularLocation>
    <text evidence="1">Associated with the membrane possibly through PlsY.</text>
</comment>
<comment type="similarity">
    <text evidence="1">Belongs to the PlsX family.</text>
</comment>
<reference key="1">
    <citation type="journal article" date="2005" name="Proc. Natl. Acad. Sci. U.S.A.">
        <title>The genome of Salinibacter ruber: convergence and gene exchange among hyperhalophilic bacteria and archaea.</title>
        <authorList>
            <person name="Mongodin E.F."/>
            <person name="Nelson K.E."/>
            <person name="Daugherty S."/>
            <person name="DeBoy R.T."/>
            <person name="Wister J."/>
            <person name="Khouri H."/>
            <person name="Weidman J."/>
            <person name="Walsh D.A."/>
            <person name="Papke R.T."/>
            <person name="Sanchez Perez G."/>
            <person name="Sharma A.K."/>
            <person name="Nesbo C.L."/>
            <person name="MacLeod D."/>
            <person name="Bapteste E."/>
            <person name="Doolittle W.F."/>
            <person name="Charlebois R.L."/>
            <person name="Legault B."/>
            <person name="Rodriguez-Valera F."/>
        </authorList>
    </citation>
    <scope>NUCLEOTIDE SEQUENCE [LARGE SCALE GENOMIC DNA]</scope>
    <source>
        <strain>DSM 13855 / CECT 5946 / M31</strain>
    </source>
</reference>
<gene>
    <name evidence="1" type="primary">plsX</name>
    <name type="ordered locus">SRU_0041</name>
</gene>
<sequence>MAASRIAVDAMGGDNAPEAVVEGAIQALHQTEGELSVLLVGPEEQLHGLLASRPEAPEERLRIVDAPEAIGMGETPSTAVKQKPNSSIHQGLAAHHDDHADAFVSAGNTGAIMAASMFILQRIPGVERPSIAGFFPTLKGSSVVLDIGSNVDCKPAHLLQFARMGTVYARQVLKTDPPSVGLLNIGEEPGKGNEQVKAAHELLRDADDVHFVGNVEGGDLLFYAADIIICDGFVGNALLKFGESMSTVLSDMCQQEMERQGLAPDEQKLVAGVLDEVREGFDPEALGGAPLLGVNGNVLVGHGRSTADVIAQMIHSARTIATENVAHALEEAFQSSSA</sequence>